<accession>P23361</accession>
<evidence type="ECO:0000250" key="1"/>
<evidence type="ECO:0000255" key="2">
    <source>
        <dbReference type="PROSITE-ProRule" id="PRU10001"/>
    </source>
</evidence>
<evidence type="ECO:0000305" key="3"/>
<proteinExistence type="inferred from homology"/>
<sequence length="254" mass="27569">MVIANSNIIFVAGLGGIGLDTSREIVKSGPKNLVLLDRIDNPAAIAELKALNPKVTITFYPYDVTVPVDETKKLLKTIFDKLKTVDLLINGAGILDDHQIERTIAVNFAGTVNTTTAILDFWDKRKGGPGGVVANICSVTGFNSIYQVPVYSASKAAALSFTMSIAKLAHITGVTAYSINPGITKTILVHKFNSWLNVEPRVAELLLEHPTQTTLQCAQNFVKAIEANQNGAIWKLDLGRLDAIEWTKHWDSGI</sequence>
<organism>
    <name type="scientific">Drosophila picticornis</name>
    <name type="common">Fruit fly</name>
    <name type="synonym">Idiomyia picticornis</name>
    <dbReference type="NCBI Taxonomy" id="7235"/>
    <lineage>
        <taxon>Eukaryota</taxon>
        <taxon>Metazoa</taxon>
        <taxon>Ecdysozoa</taxon>
        <taxon>Arthropoda</taxon>
        <taxon>Hexapoda</taxon>
        <taxon>Insecta</taxon>
        <taxon>Pterygota</taxon>
        <taxon>Neoptera</taxon>
        <taxon>Endopterygota</taxon>
        <taxon>Diptera</taxon>
        <taxon>Brachycera</taxon>
        <taxon>Muscomorpha</taxon>
        <taxon>Ephydroidea</taxon>
        <taxon>Drosophilidae</taxon>
        <taxon>Drosophila</taxon>
        <taxon>Hawaiian Drosophila</taxon>
    </lineage>
</organism>
<comment type="catalytic activity">
    <reaction evidence="2">
        <text>a primary alcohol + NAD(+) = an aldehyde + NADH + H(+)</text>
        <dbReference type="Rhea" id="RHEA:10736"/>
        <dbReference type="ChEBI" id="CHEBI:15378"/>
        <dbReference type="ChEBI" id="CHEBI:15734"/>
        <dbReference type="ChEBI" id="CHEBI:17478"/>
        <dbReference type="ChEBI" id="CHEBI:57540"/>
        <dbReference type="ChEBI" id="CHEBI:57945"/>
        <dbReference type="EC" id="1.1.1.1"/>
    </reaction>
</comment>
<comment type="catalytic activity">
    <reaction evidence="2">
        <text>a secondary alcohol + NAD(+) = a ketone + NADH + H(+)</text>
        <dbReference type="Rhea" id="RHEA:10740"/>
        <dbReference type="ChEBI" id="CHEBI:15378"/>
        <dbReference type="ChEBI" id="CHEBI:17087"/>
        <dbReference type="ChEBI" id="CHEBI:35681"/>
        <dbReference type="ChEBI" id="CHEBI:57540"/>
        <dbReference type="ChEBI" id="CHEBI:57945"/>
        <dbReference type="EC" id="1.1.1.1"/>
    </reaction>
</comment>
<comment type="subunit">
    <text>Homodimer.</text>
</comment>
<comment type="similarity">
    <text evidence="3">Belongs to the short-chain dehydrogenases/reductases (SDR) family.</text>
</comment>
<reference key="1">
    <citation type="journal article" date="1991" name="Mol. Biol. Evol.">
        <title>Rates of DNA change and phylogeny from the DNA sequences of the alcohol dehydrogenase gene for five closely related species of Hawaiian Drosophila.</title>
        <authorList>
            <person name="Rowan R.G."/>
            <person name="Hunt J.A."/>
        </authorList>
    </citation>
    <scope>NUCLEOTIDE SEQUENCE [GENOMIC DNA]</scope>
</reference>
<dbReference type="EC" id="1.1.1.1"/>
<dbReference type="EMBL" id="M63392">
    <property type="protein sequence ID" value="AAA28353.1"/>
    <property type="molecule type" value="Genomic_DNA"/>
</dbReference>
<dbReference type="PIR" id="B23724">
    <property type="entry name" value="B23724"/>
</dbReference>
<dbReference type="SMR" id="P23361"/>
<dbReference type="GO" id="GO:0005737">
    <property type="term" value="C:cytoplasm"/>
    <property type="evidence" value="ECO:0007669"/>
    <property type="project" value="TreeGrafter"/>
</dbReference>
<dbReference type="GO" id="GO:0004022">
    <property type="term" value="F:alcohol dehydrogenase (NAD+) activity"/>
    <property type="evidence" value="ECO:0007669"/>
    <property type="project" value="UniProtKB-EC"/>
</dbReference>
<dbReference type="GO" id="GO:0006066">
    <property type="term" value="P:alcohol metabolic process"/>
    <property type="evidence" value="ECO:0007669"/>
    <property type="project" value="InterPro"/>
</dbReference>
<dbReference type="CDD" id="cd05323">
    <property type="entry name" value="ADH_SDR_c_like"/>
    <property type="match status" value="1"/>
</dbReference>
<dbReference type="FunFam" id="3.40.50.720:FF:000302">
    <property type="entry name" value="Alcohol dehydrogenase"/>
    <property type="match status" value="1"/>
</dbReference>
<dbReference type="Gene3D" id="3.40.50.720">
    <property type="entry name" value="NAD(P)-binding Rossmann-like Domain"/>
    <property type="match status" value="1"/>
</dbReference>
<dbReference type="InterPro" id="IPR002425">
    <property type="entry name" value="ADH_Drosophila-type"/>
</dbReference>
<dbReference type="InterPro" id="IPR036291">
    <property type="entry name" value="NAD(P)-bd_dom_sf"/>
</dbReference>
<dbReference type="InterPro" id="IPR020904">
    <property type="entry name" value="Sc_DH/Rdtase_CS"/>
</dbReference>
<dbReference type="InterPro" id="IPR002347">
    <property type="entry name" value="SDR_fam"/>
</dbReference>
<dbReference type="PANTHER" id="PTHR44229">
    <property type="entry name" value="15-HYDROXYPROSTAGLANDIN DEHYDROGENASE [NAD(+)]"/>
    <property type="match status" value="1"/>
</dbReference>
<dbReference type="PANTHER" id="PTHR44229:SF8">
    <property type="entry name" value="ALCOHOL DEHYDROGENASE-RELATED"/>
    <property type="match status" value="1"/>
</dbReference>
<dbReference type="Pfam" id="PF00106">
    <property type="entry name" value="adh_short"/>
    <property type="match status" value="1"/>
</dbReference>
<dbReference type="PRINTS" id="PR01168">
    <property type="entry name" value="ALCDHDRGNASE"/>
</dbReference>
<dbReference type="PRINTS" id="PR01167">
    <property type="entry name" value="INSADHFAMILY"/>
</dbReference>
<dbReference type="PRINTS" id="PR00080">
    <property type="entry name" value="SDRFAMILY"/>
</dbReference>
<dbReference type="SUPFAM" id="SSF51735">
    <property type="entry name" value="NAD(P)-binding Rossmann-fold domains"/>
    <property type="match status" value="1"/>
</dbReference>
<dbReference type="PROSITE" id="PS00061">
    <property type="entry name" value="ADH_SHORT"/>
    <property type="match status" value="1"/>
</dbReference>
<gene>
    <name type="primary">Adh</name>
</gene>
<feature type="initiator methionine" description="Removed" evidence="1">
    <location>
        <position position="1"/>
    </location>
</feature>
<feature type="chain" id="PRO_0000054489" description="Alcohol dehydrogenase">
    <location>
        <begin position="2"/>
        <end position="254"/>
    </location>
</feature>
<feature type="active site" description="Proton acceptor" evidence="2">
    <location>
        <position position="151"/>
    </location>
</feature>
<feature type="binding site" evidence="1">
    <location>
        <begin position="10"/>
        <end position="33"/>
    </location>
    <ligand>
        <name>NAD(+)</name>
        <dbReference type="ChEBI" id="CHEBI:57540"/>
    </ligand>
</feature>
<feature type="binding site" evidence="1">
    <location>
        <position position="138"/>
    </location>
    <ligand>
        <name>substrate</name>
    </ligand>
</feature>
<protein>
    <recommendedName>
        <fullName>Alcohol dehydrogenase</fullName>
        <ecNumber>1.1.1.1</ecNumber>
    </recommendedName>
</protein>
<name>ADH_DROPI</name>
<keyword id="KW-0520">NAD</keyword>
<keyword id="KW-0560">Oxidoreductase</keyword>